<accession>Q3ABN1</accession>
<dbReference type="EC" id="7.-.-.-" evidence="1"/>
<dbReference type="EMBL" id="CP000141">
    <property type="protein sequence ID" value="ABB15301.1"/>
    <property type="molecule type" value="Genomic_DNA"/>
</dbReference>
<dbReference type="RefSeq" id="WP_011344528.1">
    <property type="nucleotide sequence ID" value="NC_007503.1"/>
</dbReference>
<dbReference type="SMR" id="Q3ABN1"/>
<dbReference type="STRING" id="246194.CHY_1630"/>
<dbReference type="KEGG" id="chy:CHY_1630"/>
<dbReference type="eggNOG" id="COG1122">
    <property type="taxonomic scope" value="Bacteria"/>
</dbReference>
<dbReference type="HOGENOM" id="CLU_000604_1_22_9"/>
<dbReference type="InParanoid" id="Q3ABN1"/>
<dbReference type="OrthoDB" id="9814634at2"/>
<dbReference type="Proteomes" id="UP000002706">
    <property type="component" value="Chromosome"/>
</dbReference>
<dbReference type="GO" id="GO:0043190">
    <property type="term" value="C:ATP-binding cassette (ABC) transporter complex"/>
    <property type="evidence" value="ECO:0007669"/>
    <property type="project" value="TreeGrafter"/>
</dbReference>
<dbReference type="GO" id="GO:0005524">
    <property type="term" value="F:ATP binding"/>
    <property type="evidence" value="ECO:0007669"/>
    <property type="project" value="UniProtKB-KW"/>
</dbReference>
<dbReference type="GO" id="GO:0016887">
    <property type="term" value="F:ATP hydrolysis activity"/>
    <property type="evidence" value="ECO:0007669"/>
    <property type="project" value="InterPro"/>
</dbReference>
<dbReference type="GO" id="GO:0042626">
    <property type="term" value="F:ATPase-coupled transmembrane transporter activity"/>
    <property type="evidence" value="ECO:0007669"/>
    <property type="project" value="TreeGrafter"/>
</dbReference>
<dbReference type="GO" id="GO:0006824">
    <property type="term" value="P:cobalt ion transport"/>
    <property type="evidence" value="ECO:0007669"/>
    <property type="project" value="InterPro"/>
</dbReference>
<dbReference type="CDD" id="cd03225">
    <property type="entry name" value="ABC_cobalt_CbiO_domain1"/>
    <property type="match status" value="1"/>
</dbReference>
<dbReference type="FunFam" id="3.40.50.300:FF:000224">
    <property type="entry name" value="Energy-coupling factor transporter ATP-binding protein EcfA"/>
    <property type="match status" value="1"/>
</dbReference>
<dbReference type="Gene3D" id="3.40.50.300">
    <property type="entry name" value="P-loop containing nucleotide triphosphate hydrolases"/>
    <property type="match status" value="1"/>
</dbReference>
<dbReference type="InterPro" id="IPR003593">
    <property type="entry name" value="AAA+_ATPase"/>
</dbReference>
<dbReference type="InterPro" id="IPR003439">
    <property type="entry name" value="ABC_transporter-like_ATP-bd"/>
</dbReference>
<dbReference type="InterPro" id="IPR017871">
    <property type="entry name" value="ABC_transporter-like_CS"/>
</dbReference>
<dbReference type="InterPro" id="IPR015856">
    <property type="entry name" value="ABC_transpr_CbiO/EcfA_su"/>
</dbReference>
<dbReference type="InterPro" id="IPR005876">
    <property type="entry name" value="Co_trans_ATP-bd"/>
</dbReference>
<dbReference type="InterPro" id="IPR050095">
    <property type="entry name" value="ECF_ABC_transporter_ATP-bd"/>
</dbReference>
<dbReference type="InterPro" id="IPR027417">
    <property type="entry name" value="P-loop_NTPase"/>
</dbReference>
<dbReference type="NCBIfam" id="TIGR01166">
    <property type="entry name" value="cbiO"/>
    <property type="match status" value="1"/>
</dbReference>
<dbReference type="PANTHER" id="PTHR43553:SF24">
    <property type="entry name" value="ENERGY-COUPLING FACTOR TRANSPORTER ATP-BINDING PROTEIN ECFA1"/>
    <property type="match status" value="1"/>
</dbReference>
<dbReference type="PANTHER" id="PTHR43553">
    <property type="entry name" value="HEAVY METAL TRANSPORTER"/>
    <property type="match status" value="1"/>
</dbReference>
<dbReference type="Pfam" id="PF00005">
    <property type="entry name" value="ABC_tran"/>
    <property type="match status" value="1"/>
</dbReference>
<dbReference type="SMART" id="SM00382">
    <property type="entry name" value="AAA"/>
    <property type="match status" value="1"/>
</dbReference>
<dbReference type="SUPFAM" id="SSF52540">
    <property type="entry name" value="P-loop containing nucleoside triphosphate hydrolases"/>
    <property type="match status" value="1"/>
</dbReference>
<dbReference type="PROSITE" id="PS00211">
    <property type="entry name" value="ABC_TRANSPORTER_1"/>
    <property type="match status" value="1"/>
</dbReference>
<dbReference type="PROSITE" id="PS50893">
    <property type="entry name" value="ABC_TRANSPORTER_2"/>
    <property type="match status" value="1"/>
</dbReference>
<dbReference type="PROSITE" id="PS51246">
    <property type="entry name" value="CBIO"/>
    <property type="match status" value="1"/>
</dbReference>
<proteinExistence type="inferred from homology"/>
<gene>
    <name evidence="1" type="primary">ecfA</name>
    <name type="synonym">cbiO</name>
    <name type="ordered locus">CHY_1630</name>
</gene>
<feature type="chain" id="PRO_0000287927" description="Energy-coupling factor transporter ATP-binding protein EcfA">
    <location>
        <begin position="1"/>
        <end position="270"/>
    </location>
</feature>
<feature type="domain" description="ABC transporter" evidence="1">
    <location>
        <begin position="5"/>
        <end position="238"/>
    </location>
</feature>
<feature type="binding site" evidence="1">
    <location>
        <begin position="38"/>
        <end position="45"/>
    </location>
    <ligand>
        <name>ATP</name>
        <dbReference type="ChEBI" id="CHEBI:30616"/>
    </ligand>
</feature>
<organism>
    <name type="scientific">Carboxydothermus hydrogenoformans (strain ATCC BAA-161 / DSM 6008 / Z-2901)</name>
    <dbReference type="NCBI Taxonomy" id="246194"/>
    <lineage>
        <taxon>Bacteria</taxon>
        <taxon>Bacillati</taxon>
        <taxon>Bacillota</taxon>
        <taxon>Clostridia</taxon>
        <taxon>Thermoanaerobacterales</taxon>
        <taxon>Thermoanaerobacteraceae</taxon>
        <taxon>Carboxydothermus</taxon>
    </lineage>
</organism>
<protein>
    <recommendedName>
        <fullName evidence="1">Energy-coupling factor transporter ATP-binding protein EcfA</fullName>
        <shortName evidence="1">ECF transporter A component EcfA</shortName>
        <ecNumber evidence="1">7.-.-.-</ecNumber>
    </recommendedName>
</protein>
<reference key="1">
    <citation type="journal article" date="2005" name="PLoS Genet.">
        <title>Life in hot carbon monoxide: the complete genome sequence of Carboxydothermus hydrogenoformans Z-2901.</title>
        <authorList>
            <person name="Wu M."/>
            <person name="Ren Q."/>
            <person name="Durkin A.S."/>
            <person name="Daugherty S.C."/>
            <person name="Brinkac L.M."/>
            <person name="Dodson R.J."/>
            <person name="Madupu R."/>
            <person name="Sullivan S.A."/>
            <person name="Kolonay J.F."/>
            <person name="Nelson W.C."/>
            <person name="Tallon L.J."/>
            <person name="Jones K.M."/>
            <person name="Ulrich L.E."/>
            <person name="Gonzalez J.M."/>
            <person name="Zhulin I.B."/>
            <person name="Robb F.T."/>
            <person name="Eisen J.A."/>
        </authorList>
    </citation>
    <scope>NUCLEOTIDE SEQUENCE [LARGE SCALE GENOMIC DNA]</scope>
    <source>
        <strain>ATCC BAA-161 / DSM 6008 / Z-2901</strain>
    </source>
</reference>
<keyword id="KW-0067">ATP-binding</keyword>
<keyword id="KW-1003">Cell membrane</keyword>
<keyword id="KW-0472">Membrane</keyword>
<keyword id="KW-0547">Nucleotide-binding</keyword>
<keyword id="KW-1185">Reference proteome</keyword>
<keyword id="KW-1278">Translocase</keyword>
<keyword id="KW-0813">Transport</keyword>
<comment type="function">
    <text evidence="1">ATP-binding (A) component of a common energy-coupling factor (ECF) ABC-transporter complex. Unlike classic ABC transporters this ECF transporter provides the energy necessary to transport a number of different substrates.</text>
</comment>
<comment type="subunit">
    <text evidence="1">Forms a stable energy-coupling factor (ECF) transporter complex composed of 2 membrane-embedded substrate-binding proteins (S component), 2 ATP-binding proteins (A component) and 2 transmembrane proteins (T component).</text>
</comment>
<comment type="subcellular location">
    <subcellularLocation>
        <location evidence="1">Cell membrane</location>
        <topology evidence="1">Peripheral membrane protein</topology>
    </subcellularLocation>
</comment>
<comment type="similarity">
    <text evidence="1">Belongs to the ABC transporter superfamily. Energy-coupling factor EcfA family.</text>
</comment>
<sequence length="270" mass="30362">MNLAVEIENLTFFYPDGNKALDGVSFVIPERSKTVILGHNGAGKSTLLLHLNGLYTASRGRVKIFGKVINEENIREIRKKVGLVFQDPDDQLFASTIFDDVAFGPQNLELDKKEILRRVEEALKAVDMWDLRERPPHHLSLGQKKRAAIAGVLAMEPDIVVLDEPMAYLDPRGQEEITAILNRLNNEGKTVIVSTHDLDWALEWADYVVVLNAGRVVAEGDKSILTNRQLLEQNGLKAPLLVKLFEDFEGKLGIPTNLKEARQILRKFIF</sequence>
<evidence type="ECO:0000255" key="1">
    <source>
        <dbReference type="HAMAP-Rule" id="MF_01710"/>
    </source>
</evidence>
<name>ECFA_CARHZ</name>